<sequence length="314" mass="35500">MKKKIAEYEVGEQVDVFLLIKTATKGIASNGKPFLTVILQDPSGDIEAKLWDVSPEVEKQYVAETIVKVAGDILNYKGRIQLRVKQIRVANENEVTDISDFVEKAPVKKEDMVEKITQYIFEMRNPNIQRLTRHLLNKHQNEFLDYPAATKNHHEFVSGLAYHVVSMLDLAKAISNLYPSLDKDLLYAGVILHDLGKVIELSGPISTTYTLEGNLLGHISIMVNEIGKAADELQIDAEEVLILQHIVLSHHGKAEWGSPKPPLVKEAEILHYIDNLDAKMNMMDRALGRTKPGEYTERVFALDNRSFYKPSFHN</sequence>
<reference key="1">
    <citation type="submission" date="2008-10" db="EMBL/GenBank/DDBJ databases">
        <title>Genome sequence of Bacillus anthracis str. CDC 684.</title>
        <authorList>
            <person name="Dodson R.J."/>
            <person name="Munk A.C."/>
            <person name="Brettin T."/>
            <person name="Bruce D."/>
            <person name="Detter C."/>
            <person name="Tapia R."/>
            <person name="Han C."/>
            <person name="Sutton G."/>
            <person name="Sims D."/>
        </authorList>
    </citation>
    <scope>NUCLEOTIDE SEQUENCE [LARGE SCALE GENOMIC DNA]</scope>
    <source>
        <strain>CDC 684 / NRRL 3495</strain>
    </source>
</reference>
<feature type="chain" id="PRO_1000184881" description="3'-5' exoribonuclease YhaM">
    <location>
        <begin position="1"/>
        <end position="314"/>
    </location>
</feature>
<feature type="domain" description="HD" evidence="2">
    <location>
        <begin position="163"/>
        <end position="279"/>
    </location>
</feature>
<name>YHAM_BACAC</name>
<evidence type="ECO:0000255" key="1">
    <source>
        <dbReference type="HAMAP-Rule" id="MF_01427"/>
    </source>
</evidence>
<evidence type="ECO:0000255" key="2">
    <source>
        <dbReference type="PROSITE-ProRule" id="PRU01175"/>
    </source>
</evidence>
<gene>
    <name evidence="1" type="primary">yhaM</name>
    <name type="ordered locus">BAMEG_3558</name>
</gene>
<accession>C3LCZ8</accession>
<organism>
    <name type="scientific">Bacillus anthracis (strain CDC 684 / NRRL 3495)</name>
    <dbReference type="NCBI Taxonomy" id="568206"/>
    <lineage>
        <taxon>Bacteria</taxon>
        <taxon>Bacillati</taxon>
        <taxon>Bacillota</taxon>
        <taxon>Bacilli</taxon>
        <taxon>Bacillales</taxon>
        <taxon>Bacillaceae</taxon>
        <taxon>Bacillus</taxon>
        <taxon>Bacillus cereus group</taxon>
    </lineage>
</organism>
<protein>
    <recommendedName>
        <fullName evidence="1">3'-5' exoribonuclease YhaM</fullName>
        <ecNumber evidence="1">3.1.-.-</ecNumber>
    </recommendedName>
</protein>
<dbReference type="EC" id="3.1.-.-" evidence="1"/>
<dbReference type="EMBL" id="CP001215">
    <property type="protein sequence ID" value="ACP12760.1"/>
    <property type="molecule type" value="Genomic_DNA"/>
</dbReference>
<dbReference type="RefSeq" id="WP_000726642.1">
    <property type="nucleotide sequence ID" value="NC_012581.1"/>
</dbReference>
<dbReference type="SMR" id="C3LCZ8"/>
<dbReference type="GeneID" id="75084326"/>
<dbReference type="KEGG" id="bah:BAMEG_3558"/>
<dbReference type="HOGENOM" id="CLU_056349_2_0_9"/>
<dbReference type="GO" id="GO:0000175">
    <property type="term" value="F:3'-5'-RNA exonuclease activity"/>
    <property type="evidence" value="ECO:0007669"/>
    <property type="project" value="UniProtKB-UniRule"/>
</dbReference>
<dbReference type="GO" id="GO:0003676">
    <property type="term" value="F:nucleic acid binding"/>
    <property type="evidence" value="ECO:0007669"/>
    <property type="project" value="InterPro"/>
</dbReference>
<dbReference type="GO" id="GO:0031125">
    <property type="term" value="P:rRNA 3'-end processing"/>
    <property type="evidence" value="ECO:0007669"/>
    <property type="project" value="TreeGrafter"/>
</dbReference>
<dbReference type="CDD" id="cd00077">
    <property type="entry name" value="HDc"/>
    <property type="match status" value="1"/>
</dbReference>
<dbReference type="CDD" id="cd04492">
    <property type="entry name" value="YhaM_OBF_like"/>
    <property type="match status" value="1"/>
</dbReference>
<dbReference type="FunFam" id="1.10.3210.10:FF:000008">
    <property type="entry name" value="3'-5' exoribonuclease YhaM"/>
    <property type="match status" value="1"/>
</dbReference>
<dbReference type="Gene3D" id="1.10.3210.10">
    <property type="entry name" value="Hypothetical protein af1432"/>
    <property type="match status" value="1"/>
</dbReference>
<dbReference type="Gene3D" id="2.40.50.140">
    <property type="entry name" value="Nucleic acid-binding proteins"/>
    <property type="match status" value="1"/>
</dbReference>
<dbReference type="HAMAP" id="MF_01427">
    <property type="entry name" value="3_5_Exoribonuc_YhaM"/>
    <property type="match status" value="1"/>
</dbReference>
<dbReference type="InterPro" id="IPR020873">
    <property type="entry name" value="3'-5'_exoribonuclease_YhaM"/>
</dbReference>
<dbReference type="InterPro" id="IPR003607">
    <property type="entry name" value="HD/PDEase_dom"/>
</dbReference>
<dbReference type="InterPro" id="IPR006674">
    <property type="entry name" value="HD_domain"/>
</dbReference>
<dbReference type="InterPro" id="IPR012340">
    <property type="entry name" value="NA-bd_OB-fold"/>
</dbReference>
<dbReference type="InterPro" id="IPR004365">
    <property type="entry name" value="NA-bd_OB_tRNA"/>
</dbReference>
<dbReference type="InterPro" id="IPR050798">
    <property type="entry name" value="YhaM_exoribonuc/phosphodiest"/>
</dbReference>
<dbReference type="NCBIfam" id="NF010007">
    <property type="entry name" value="PRK13480.1"/>
    <property type="match status" value="1"/>
</dbReference>
<dbReference type="PANTHER" id="PTHR37294">
    <property type="entry name" value="3'-5' EXORIBONUCLEASE YHAM"/>
    <property type="match status" value="1"/>
</dbReference>
<dbReference type="PANTHER" id="PTHR37294:SF1">
    <property type="entry name" value="3'-5' EXORIBONUCLEASE YHAM"/>
    <property type="match status" value="1"/>
</dbReference>
<dbReference type="Pfam" id="PF01966">
    <property type="entry name" value="HD"/>
    <property type="match status" value="1"/>
</dbReference>
<dbReference type="Pfam" id="PF01336">
    <property type="entry name" value="tRNA_anti-codon"/>
    <property type="match status" value="1"/>
</dbReference>
<dbReference type="SMART" id="SM00471">
    <property type="entry name" value="HDc"/>
    <property type="match status" value="1"/>
</dbReference>
<dbReference type="SUPFAM" id="SSF109604">
    <property type="entry name" value="HD-domain/PDEase-like"/>
    <property type="match status" value="1"/>
</dbReference>
<dbReference type="SUPFAM" id="SSF50249">
    <property type="entry name" value="Nucleic acid-binding proteins"/>
    <property type="match status" value="1"/>
</dbReference>
<dbReference type="PROSITE" id="PS51831">
    <property type="entry name" value="HD"/>
    <property type="match status" value="1"/>
</dbReference>
<keyword id="KW-0269">Exonuclease</keyword>
<keyword id="KW-0378">Hydrolase</keyword>
<keyword id="KW-0540">Nuclease</keyword>
<comment type="function">
    <text evidence="1">Shows a 3'-5' exoribonuclease activity.</text>
</comment>
<comment type="similarity">
    <text evidence="1">Belongs to the YhaM family.</text>
</comment>
<proteinExistence type="inferred from homology"/>